<keyword id="KW-0113">Calvin cycle</keyword>
<keyword id="KW-0119">Carbohydrate metabolism</keyword>
<keyword id="KW-0963">Cytoplasm</keyword>
<keyword id="KW-0378">Hydrolase</keyword>
<keyword id="KW-0460">Magnesium</keyword>
<keyword id="KW-0479">Metal-binding</keyword>
<organism>
    <name type="scientific">Cereibacter sphaeroides (strain ATCC 17029 / ATH 2.4.9)</name>
    <name type="common">Rhodobacter sphaeroides</name>
    <dbReference type="NCBI Taxonomy" id="349101"/>
    <lineage>
        <taxon>Bacteria</taxon>
        <taxon>Pseudomonadati</taxon>
        <taxon>Pseudomonadota</taxon>
        <taxon>Alphaproteobacteria</taxon>
        <taxon>Rhodobacterales</taxon>
        <taxon>Paracoccaceae</taxon>
        <taxon>Cereibacter</taxon>
    </lineage>
</organism>
<accession>A3PRW1</accession>
<name>F16A2_CERS1</name>
<evidence type="ECO:0000255" key="1">
    <source>
        <dbReference type="HAMAP-Rule" id="MF_01855"/>
    </source>
</evidence>
<sequence length="331" mass="35355">MAIELEDLGLSPDVADVMQRLARVGAGIARIISRNGLERDLGAGVGTNAGGDGQKALDVIADDAFRAALEGSAVAYYASEEQDEVVTLGEGSLALAIDPLDGSSNIDVNVSIGTIFSIFPAAAGPEASFLRPGTEQIAGGYIIYGPQCALVCSFGQGVQHWVLDLDAGIFRRMPDIRPLPAETSEFAINASNYRHWPQPIRAFVDDLVAGAEGPRGKNFNMRWIASLVAETHRILMRGGVFLYPGDERKGYERGRLRHVYECAPIAFLIANVGGRATDGCADILTALPDRLHARTPFVFGCASKVARVAAYHDLACEETSALFGSRGLFRS</sequence>
<proteinExistence type="inferred from homology"/>
<dbReference type="EC" id="3.1.3.11" evidence="1"/>
<dbReference type="EMBL" id="CP000578">
    <property type="protein sequence ID" value="ABN79077.1"/>
    <property type="molecule type" value="Genomic_DNA"/>
</dbReference>
<dbReference type="RefSeq" id="WP_011842803.1">
    <property type="nucleotide sequence ID" value="NC_009050.1"/>
</dbReference>
<dbReference type="SMR" id="A3PRW1"/>
<dbReference type="KEGG" id="rsh:Rsph17029_3999"/>
<dbReference type="HOGENOM" id="CLU_039977_0_0_5"/>
<dbReference type="UniPathway" id="UPA00116"/>
<dbReference type="GO" id="GO:0005829">
    <property type="term" value="C:cytosol"/>
    <property type="evidence" value="ECO:0007669"/>
    <property type="project" value="TreeGrafter"/>
</dbReference>
<dbReference type="GO" id="GO:0042132">
    <property type="term" value="F:fructose 1,6-bisphosphate 1-phosphatase activity"/>
    <property type="evidence" value="ECO:0007669"/>
    <property type="project" value="UniProtKB-UniRule"/>
</dbReference>
<dbReference type="GO" id="GO:0000287">
    <property type="term" value="F:magnesium ion binding"/>
    <property type="evidence" value="ECO:0007669"/>
    <property type="project" value="UniProtKB-UniRule"/>
</dbReference>
<dbReference type="GO" id="GO:0030388">
    <property type="term" value="P:fructose 1,6-bisphosphate metabolic process"/>
    <property type="evidence" value="ECO:0007669"/>
    <property type="project" value="TreeGrafter"/>
</dbReference>
<dbReference type="GO" id="GO:0006002">
    <property type="term" value="P:fructose 6-phosphate metabolic process"/>
    <property type="evidence" value="ECO:0007669"/>
    <property type="project" value="TreeGrafter"/>
</dbReference>
<dbReference type="GO" id="GO:0006000">
    <property type="term" value="P:fructose metabolic process"/>
    <property type="evidence" value="ECO:0007669"/>
    <property type="project" value="TreeGrafter"/>
</dbReference>
<dbReference type="GO" id="GO:0006094">
    <property type="term" value="P:gluconeogenesis"/>
    <property type="evidence" value="ECO:0007669"/>
    <property type="project" value="UniProtKB-UniRule"/>
</dbReference>
<dbReference type="GO" id="GO:0019253">
    <property type="term" value="P:reductive pentose-phosphate cycle"/>
    <property type="evidence" value="ECO:0007669"/>
    <property type="project" value="UniProtKB-UniPathway"/>
</dbReference>
<dbReference type="GO" id="GO:0005986">
    <property type="term" value="P:sucrose biosynthetic process"/>
    <property type="evidence" value="ECO:0007669"/>
    <property type="project" value="TreeGrafter"/>
</dbReference>
<dbReference type="CDD" id="cd00354">
    <property type="entry name" value="FBPase"/>
    <property type="match status" value="1"/>
</dbReference>
<dbReference type="Gene3D" id="3.40.190.80">
    <property type="match status" value="1"/>
</dbReference>
<dbReference type="Gene3D" id="3.30.540.10">
    <property type="entry name" value="Fructose-1,6-Bisphosphatase, subunit A, domain 1"/>
    <property type="match status" value="1"/>
</dbReference>
<dbReference type="HAMAP" id="MF_01855">
    <property type="entry name" value="FBPase_class1"/>
    <property type="match status" value="1"/>
</dbReference>
<dbReference type="InterPro" id="IPR044015">
    <property type="entry name" value="FBPase_C_dom"/>
</dbReference>
<dbReference type="InterPro" id="IPR000146">
    <property type="entry name" value="FBPase_class-1"/>
</dbReference>
<dbReference type="InterPro" id="IPR033391">
    <property type="entry name" value="FBPase_N"/>
</dbReference>
<dbReference type="InterPro" id="IPR028343">
    <property type="entry name" value="FBPtase"/>
</dbReference>
<dbReference type="InterPro" id="IPR020548">
    <property type="entry name" value="Fructose_bisphosphatase_AS"/>
</dbReference>
<dbReference type="NCBIfam" id="NF006780">
    <property type="entry name" value="PRK09293.1-4"/>
    <property type="match status" value="1"/>
</dbReference>
<dbReference type="PANTHER" id="PTHR11556">
    <property type="entry name" value="FRUCTOSE-1,6-BISPHOSPHATASE-RELATED"/>
    <property type="match status" value="1"/>
</dbReference>
<dbReference type="PANTHER" id="PTHR11556:SF35">
    <property type="entry name" value="SEDOHEPTULOSE-1,7-BISPHOSPHATASE, CHLOROPLASTIC"/>
    <property type="match status" value="1"/>
</dbReference>
<dbReference type="Pfam" id="PF00316">
    <property type="entry name" value="FBPase"/>
    <property type="match status" value="1"/>
</dbReference>
<dbReference type="Pfam" id="PF18913">
    <property type="entry name" value="FBPase_C"/>
    <property type="match status" value="1"/>
</dbReference>
<dbReference type="PIRSF" id="PIRSF500210">
    <property type="entry name" value="FBPtase"/>
    <property type="match status" value="1"/>
</dbReference>
<dbReference type="PIRSF" id="PIRSF000904">
    <property type="entry name" value="FBPtase_SBPase"/>
    <property type="match status" value="1"/>
</dbReference>
<dbReference type="PRINTS" id="PR00115">
    <property type="entry name" value="F16BPHPHTASE"/>
</dbReference>
<dbReference type="SUPFAM" id="SSF56655">
    <property type="entry name" value="Carbohydrate phosphatase"/>
    <property type="match status" value="1"/>
</dbReference>
<dbReference type="PROSITE" id="PS00124">
    <property type="entry name" value="FBPASE"/>
    <property type="match status" value="1"/>
</dbReference>
<feature type="chain" id="PRO_0000364671" description="Fructose-1,6-bisphosphatase class 1 2">
    <location>
        <begin position="1"/>
        <end position="331"/>
    </location>
</feature>
<feature type="binding site" evidence="1">
    <location>
        <position position="80"/>
    </location>
    <ligand>
        <name>Mg(2+)</name>
        <dbReference type="ChEBI" id="CHEBI:18420"/>
        <label>1</label>
    </ligand>
</feature>
<feature type="binding site" evidence="1">
    <location>
        <position position="98"/>
    </location>
    <ligand>
        <name>Mg(2+)</name>
        <dbReference type="ChEBI" id="CHEBI:18420"/>
        <label>1</label>
    </ligand>
</feature>
<feature type="binding site" evidence="1">
    <location>
        <position position="98"/>
    </location>
    <ligand>
        <name>Mg(2+)</name>
        <dbReference type="ChEBI" id="CHEBI:18420"/>
        <label>2</label>
    </ligand>
</feature>
<feature type="binding site" evidence="1">
    <location>
        <position position="100"/>
    </location>
    <ligand>
        <name>Mg(2+)</name>
        <dbReference type="ChEBI" id="CHEBI:18420"/>
        <label>1</label>
    </ligand>
</feature>
<feature type="binding site" evidence="1">
    <location>
        <begin position="101"/>
        <end position="104"/>
    </location>
    <ligand>
        <name>substrate</name>
    </ligand>
</feature>
<feature type="binding site" evidence="1">
    <location>
        <position position="101"/>
    </location>
    <ligand>
        <name>Mg(2+)</name>
        <dbReference type="ChEBI" id="CHEBI:18420"/>
        <label>2</label>
    </ligand>
</feature>
<feature type="binding site" evidence="1">
    <location>
        <position position="189"/>
    </location>
    <ligand>
        <name>substrate</name>
    </ligand>
</feature>
<feature type="binding site" evidence="1">
    <location>
        <position position="261"/>
    </location>
    <ligand>
        <name>Mg(2+)</name>
        <dbReference type="ChEBI" id="CHEBI:18420"/>
        <label>2</label>
    </ligand>
</feature>
<gene>
    <name evidence="1" type="primary">fbp2</name>
    <name type="ordered locus">Rsph17029_3999</name>
</gene>
<comment type="catalytic activity">
    <reaction evidence="1">
        <text>beta-D-fructose 1,6-bisphosphate + H2O = beta-D-fructose 6-phosphate + phosphate</text>
        <dbReference type="Rhea" id="RHEA:11064"/>
        <dbReference type="ChEBI" id="CHEBI:15377"/>
        <dbReference type="ChEBI" id="CHEBI:32966"/>
        <dbReference type="ChEBI" id="CHEBI:43474"/>
        <dbReference type="ChEBI" id="CHEBI:57634"/>
        <dbReference type="EC" id="3.1.3.11"/>
    </reaction>
</comment>
<comment type="cofactor">
    <cofactor evidence="1">
        <name>Mg(2+)</name>
        <dbReference type="ChEBI" id="CHEBI:18420"/>
    </cofactor>
    <text evidence="1">Binds 2 magnesium ions per subunit.</text>
</comment>
<comment type="pathway">
    <text evidence="1">Carbohydrate biosynthesis; Calvin cycle.</text>
</comment>
<comment type="subunit">
    <text evidence="1">Homotetramer.</text>
</comment>
<comment type="subcellular location">
    <subcellularLocation>
        <location evidence="1">Cytoplasm</location>
    </subcellularLocation>
</comment>
<comment type="similarity">
    <text evidence="1">Belongs to the FBPase class 1 family.</text>
</comment>
<reference key="1">
    <citation type="submission" date="2007-02" db="EMBL/GenBank/DDBJ databases">
        <title>Complete sequence of chromosome 2 of Rhodobacter sphaeroides ATCC 17029.</title>
        <authorList>
            <person name="Copeland A."/>
            <person name="Lucas S."/>
            <person name="Lapidus A."/>
            <person name="Barry K."/>
            <person name="Detter J.C."/>
            <person name="Glavina del Rio T."/>
            <person name="Hammon N."/>
            <person name="Israni S."/>
            <person name="Dalin E."/>
            <person name="Tice H."/>
            <person name="Pitluck S."/>
            <person name="Kiss H."/>
            <person name="Brettin T."/>
            <person name="Bruce D."/>
            <person name="Han C."/>
            <person name="Tapia R."/>
            <person name="Gilna P."/>
            <person name="Schmutz J."/>
            <person name="Larimer F."/>
            <person name="Land M."/>
            <person name="Hauser L."/>
            <person name="Kyrpides N."/>
            <person name="Mikhailova N."/>
            <person name="Richardson P."/>
            <person name="Mackenzie C."/>
            <person name="Choudhary M."/>
            <person name="Donohue T.J."/>
            <person name="Kaplan S."/>
        </authorList>
    </citation>
    <scope>NUCLEOTIDE SEQUENCE [LARGE SCALE GENOMIC DNA]</scope>
    <source>
        <strain>ATCC 17029 / ATH 2.4.9</strain>
    </source>
</reference>
<protein>
    <recommendedName>
        <fullName evidence="1">Fructose-1,6-bisphosphatase class 1 2</fullName>
        <shortName evidence="1">FBPase class 1 2</shortName>
        <ecNumber evidence="1">3.1.3.11</ecNumber>
    </recommendedName>
    <alternativeName>
        <fullName evidence="1">D-fructose-1,6-bisphosphate 1-phosphohydrolase class 1 2</fullName>
    </alternativeName>
</protein>